<comment type="function">
    <text evidence="1">Involved in peroxisome biosynthesis.</text>
</comment>
<comment type="subcellular location">
    <subcellularLocation>
        <location evidence="1">Peroxisome membrane</location>
        <topology evidence="1">Single-pass membrane protein</topology>
    </subcellularLocation>
</comment>
<comment type="similarity">
    <text evidence="4">Belongs to the peroxin-3 family.</text>
</comment>
<sequence length="446" mass="49700">MARTGLQRHRGKLLGTGAVLGGLVVAGVVAAVAAKRWVRRQQQRLSEQHYVREQIKRRFTQTQQDALYTMYELVPVLALVLGKELDVEELVETLKGKKLKRAGEDDEQGSGGHASAGEGSVSSTVARSKAELWQELKMRSAVKLLAVVYTTCMLLLLTRLQLNILARREYLETAIRVAKGEEATRRDAAGWLGAVWEYGAAALGALGPRPAVTAVEPVDQHEETRYVNEQAFLSLSWWLLNRGWLQFKPLIERQVEQQFGTLSPRDTLSMEQFSARLSNTIHAVNRELFDSDSRALLLRALLPDATEELHVLQQTLDEGSLRVIERDDSMLRELLQETCRCAESTASLIVLESLVNESFQFVMQQLETKVTKKLRKPATDAPEADGAADAPSQKFQVALYSVALKDCCQEMLKNGLVSMNNEYLQDLDAVPELDDLSASVYSNFGV</sequence>
<name>PEX3_EREGS</name>
<reference key="1">
    <citation type="journal article" date="2004" name="Science">
        <title>The Ashbya gossypii genome as a tool for mapping the ancient Saccharomyces cerevisiae genome.</title>
        <authorList>
            <person name="Dietrich F.S."/>
            <person name="Voegeli S."/>
            <person name="Brachat S."/>
            <person name="Lerch A."/>
            <person name="Gates K."/>
            <person name="Steiner S."/>
            <person name="Mohr C."/>
            <person name="Poehlmann R."/>
            <person name="Luedi P."/>
            <person name="Choi S."/>
            <person name="Wing R.A."/>
            <person name="Flavier A."/>
            <person name="Gaffney T.D."/>
            <person name="Philippsen P."/>
        </authorList>
    </citation>
    <scope>NUCLEOTIDE SEQUENCE [LARGE SCALE GENOMIC DNA]</scope>
    <source>
        <strain>ATCC 10895 / CBS 109.51 / FGSC 9923 / NRRL Y-1056</strain>
    </source>
</reference>
<reference key="2">
    <citation type="journal article" date="2013" name="G3 (Bethesda)">
        <title>Genomes of Ashbya fungi isolated from insects reveal four mating-type loci, numerous translocations, lack of transposons, and distinct gene duplications.</title>
        <authorList>
            <person name="Dietrich F.S."/>
            <person name="Voegeli S."/>
            <person name="Kuo S."/>
            <person name="Philippsen P."/>
        </authorList>
    </citation>
    <scope>GENOME REANNOTATION</scope>
    <source>
        <strain>ATCC 10895 / CBS 109.51 / FGSC 9923 / NRRL Y-1056</strain>
    </source>
</reference>
<accession>Q759H4</accession>
<dbReference type="EMBL" id="AE016817">
    <property type="protein sequence ID" value="AAS52217.1"/>
    <property type="molecule type" value="Genomic_DNA"/>
</dbReference>
<dbReference type="RefSeq" id="NP_984393.1">
    <property type="nucleotide sequence ID" value="NM_209746.1"/>
</dbReference>
<dbReference type="SMR" id="Q759H4"/>
<dbReference type="FunCoup" id="Q759H4">
    <property type="interactions" value="208"/>
</dbReference>
<dbReference type="STRING" id="284811.Q759H4"/>
<dbReference type="EnsemblFungi" id="AAS52217">
    <property type="protein sequence ID" value="AAS52217"/>
    <property type="gene ID" value="AGOS_ADR296C"/>
</dbReference>
<dbReference type="GeneID" id="4620555"/>
<dbReference type="KEGG" id="ago:AGOS_ADR296C"/>
<dbReference type="eggNOG" id="KOG4444">
    <property type="taxonomic scope" value="Eukaryota"/>
</dbReference>
<dbReference type="HOGENOM" id="CLU_017002_0_0_1"/>
<dbReference type="InParanoid" id="Q759H4"/>
<dbReference type="OMA" id="WLYKQQL"/>
<dbReference type="OrthoDB" id="45930at2759"/>
<dbReference type="Proteomes" id="UP000000591">
    <property type="component" value="Chromosome IV"/>
</dbReference>
<dbReference type="GO" id="GO:0005783">
    <property type="term" value="C:endoplasmic reticulum"/>
    <property type="evidence" value="ECO:0007669"/>
    <property type="project" value="EnsemblFungi"/>
</dbReference>
<dbReference type="GO" id="GO:0005778">
    <property type="term" value="C:peroxisomal membrane"/>
    <property type="evidence" value="ECO:0000318"/>
    <property type="project" value="GO_Central"/>
</dbReference>
<dbReference type="GO" id="GO:0030674">
    <property type="term" value="F:protein-macromolecule adaptor activity"/>
    <property type="evidence" value="ECO:0000318"/>
    <property type="project" value="GO_Central"/>
</dbReference>
<dbReference type="GO" id="GO:0032581">
    <property type="term" value="P:ER-dependent peroxisome organization"/>
    <property type="evidence" value="ECO:0007669"/>
    <property type="project" value="EnsemblFungi"/>
</dbReference>
<dbReference type="GO" id="GO:0045033">
    <property type="term" value="P:peroxisome inheritance"/>
    <property type="evidence" value="ECO:0007669"/>
    <property type="project" value="EnsemblFungi"/>
</dbReference>
<dbReference type="GO" id="GO:0045046">
    <property type="term" value="P:protein import into peroxisome membrane"/>
    <property type="evidence" value="ECO:0000318"/>
    <property type="project" value="GO_Central"/>
</dbReference>
<dbReference type="InterPro" id="IPR006966">
    <property type="entry name" value="Peroxin-3"/>
</dbReference>
<dbReference type="PANTHER" id="PTHR28080">
    <property type="entry name" value="PEROXISOMAL BIOGENESIS FACTOR 3"/>
    <property type="match status" value="1"/>
</dbReference>
<dbReference type="PANTHER" id="PTHR28080:SF1">
    <property type="entry name" value="PEROXISOMAL BIOGENESIS FACTOR 3"/>
    <property type="match status" value="1"/>
</dbReference>
<dbReference type="Pfam" id="PF04882">
    <property type="entry name" value="Peroxin-3"/>
    <property type="match status" value="2"/>
</dbReference>
<gene>
    <name type="primary">PEX3</name>
    <name type="ordered locus">ADR296C</name>
</gene>
<organism>
    <name type="scientific">Eremothecium gossypii (strain ATCC 10895 / CBS 109.51 / FGSC 9923 / NRRL Y-1056)</name>
    <name type="common">Yeast</name>
    <name type="synonym">Ashbya gossypii</name>
    <dbReference type="NCBI Taxonomy" id="284811"/>
    <lineage>
        <taxon>Eukaryota</taxon>
        <taxon>Fungi</taxon>
        <taxon>Dikarya</taxon>
        <taxon>Ascomycota</taxon>
        <taxon>Saccharomycotina</taxon>
        <taxon>Saccharomycetes</taxon>
        <taxon>Saccharomycetales</taxon>
        <taxon>Saccharomycetaceae</taxon>
        <taxon>Eremothecium</taxon>
    </lineage>
</organism>
<feature type="chain" id="PRO_0000208741" description="Peroxisomal biogenesis factor 3">
    <location>
        <begin position="1"/>
        <end position="446"/>
    </location>
</feature>
<feature type="topological domain" description="Peroxisomal" evidence="2">
    <location>
        <begin position="1"/>
        <end position="12"/>
    </location>
</feature>
<feature type="transmembrane region" description="Helical" evidence="2">
    <location>
        <begin position="13"/>
        <end position="33"/>
    </location>
</feature>
<feature type="topological domain" description="Cytoplasmic" evidence="2">
    <location>
        <begin position="34"/>
        <end position="446"/>
    </location>
</feature>
<feature type="region of interest" description="Disordered" evidence="3">
    <location>
        <begin position="101"/>
        <end position="122"/>
    </location>
</feature>
<evidence type="ECO:0000250" key="1"/>
<evidence type="ECO:0000255" key="2"/>
<evidence type="ECO:0000256" key="3">
    <source>
        <dbReference type="SAM" id="MobiDB-lite"/>
    </source>
</evidence>
<evidence type="ECO:0000305" key="4"/>
<keyword id="KW-0472">Membrane</keyword>
<keyword id="KW-0576">Peroxisome</keyword>
<keyword id="KW-0962">Peroxisome biogenesis</keyword>
<keyword id="KW-1185">Reference proteome</keyword>
<keyword id="KW-0812">Transmembrane</keyword>
<keyword id="KW-1133">Transmembrane helix</keyword>
<protein>
    <recommendedName>
        <fullName>Peroxisomal biogenesis factor 3</fullName>
    </recommendedName>
    <alternativeName>
        <fullName>Peroxin-3</fullName>
    </alternativeName>
</protein>
<proteinExistence type="inferred from homology"/>